<accession>Q9XIR8</accession>
<sequence>MAAEPKAATAEVVKMDLFEDDDEFEEFEINEDWLEKEEVKEVSQQWEDDWDDDDVNDDFSRQLRKELENGTDKK</sequence>
<name>SEM11_ARATH</name>
<reference key="1">
    <citation type="journal article" date="2000" name="Nature">
        <title>Sequence and analysis of chromosome 1 of the plant Arabidopsis thaliana.</title>
        <authorList>
            <person name="Theologis A."/>
            <person name="Ecker J.R."/>
            <person name="Palm C.J."/>
            <person name="Federspiel N.A."/>
            <person name="Kaul S."/>
            <person name="White O."/>
            <person name="Alonso J."/>
            <person name="Altafi H."/>
            <person name="Araujo R."/>
            <person name="Bowman C.L."/>
            <person name="Brooks S.Y."/>
            <person name="Buehler E."/>
            <person name="Chan A."/>
            <person name="Chao Q."/>
            <person name="Chen H."/>
            <person name="Cheuk R.F."/>
            <person name="Chin C.W."/>
            <person name="Chung M.K."/>
            <person name="Conn L."/>
            <person name="Conway A.B."/>
            <person name="Conway A.R."/>
            <person name="Creasy T.H."/>
            <person name="Dewar K."/>
            <person name="Dunn P."/>
            <person name="Etgu P."/>
            <person name="Feldblyum T.V."/>
            <person name="Feng J.-D."/>
            <person name="Fong B."/>
            <person name="Fujii C.Y."/>
            <person name="Gill J.E."/>
            <person name="Goldsmith A.D."/>
            <person name="Haas B."/>
            <person name="Hansen N.F."/>
            <person name="Hughes B."/>
            <person name="Huizar L."/>
            <person name="Hunter J.L."/>
            <person name="Jenkins J."/>
            <person name="Johnson-Hopson C."/>
            <person name="Khan S."/>
            <person name="Khaykin E."/>
            <person name="Kim C.J."/>
            <person name="Koo H.L."/>
            <person name="Kremenetskaia I."/>
            <person name="Kurtz D.B."/>
            <person name="Kwan A."/>
            <person name="Lam B."/>
            <person name="Langin-Hooper S."/>
            <person name="Lee A."/>
            <person name="Lee J.M."/>
            <person name="Lenz C.A."/>
            <person name="Li J.H."/>
            <person name="Li Y.-P."/>
            <person name="Lin X."/>
            <person name="Liu S.X."/>
            <person name="Liu Z.A."/>
            <person name="Luros J.S."/>
            <person name="Maiti R."/>
            <person name="Marziali A."/>
            <person name="Militscher J."/>
            <person name="Miranda M."/>
            <person name="Nguyen M."/>
            <person name="Nierman W.C."/>
            <person name="Osborne B.I."/>
            <person name="Pai G."/>
            <person name="Peterson J."/>
            <person name="Pham P.K."/>
            <person name="Rizzo M."/>
            <person name="Rooney T."/>
            <person name="Rowley D."/>
            <person name="Sakano H."/>
            <person name="Salzberg S.L."/>
            <person name="Schwartz J.R."/>
            <person name="Shinn P."/>
            <person name="Southwick A.M."/>
            <person name="Sun H."/>
            <person name="Tallon L.J."/>
            <person name="Tambunga G."/>
            <person name="Toriumi M.J."/>
            <person name="Town C.D."/>
            <person name="Utterback T."/>
            <person name="Van Aken S."/>
            <person name="Vaysberg M."/>
            <person name="Vysotskaia V.S."/>
            <person name="Walker M."/>
            <person name="Wu D."/>
            <person name="Yu G."/>
            <person name="Fraser C.M."/>
            <person name="Venter J.C."/>
            <person name="Davis R.W."/>
        </authorList>
    </citation>
    <scope>NUCLEOTIDE SEQUENCE [LARGE SCALE GENOMIC DNA]</scope>
    <source>
        <strain>cv. Columbia</strain>
    </source>
</reference>
<reference key="2">
    <citation type="journal article" date="2017" name="Plant J.">
        <title>Araport11: a complete reannotation of the Arabidopsis thaliana reference genome.</title>
        <authorList>
            <person name="Cheng C.Y."/>
            <person name="Krishnakumar V."/>
            <person name="Chan A.P."/>
            <person name="Thibaud-Nissen F."/>
            <person name="Schobel S."/>
            <person name="Town C.D."/>
        </authorList>
    </citation>
    <scope>GENOME REANNOTATION</scope>
    <source>
        <strain>cv. Columbia</strain>
    </source>
</reference>
<reference key="3">
    <citation type="journal article" date="2003" name="Science">
        <title>Empirical analysis of transcriptional activity in the Arabidopsis genome.</title>
        <authorList>
            <person name="Yamada K."/>
            <person name="Lim J."/>
            <person name="Dale J.M."/>
            <person name="Chen H."/>
            <person name="Shinn P."/>
            <person name="Palm C.J."/>
            <person name="Southwick A.M."/>
            <person name="Wu H.C."/>
            <person name="Kim C.J."/>
            <person name="Nguyen M."/>
            <person name="Pham P.K."/>
            <person name="Cheuk R.F."/>
            <person name="Karlin-Newmann G."/>
            <person name="Liu S.X."/>
            <person name="Lam B."/>
            <person name="Sakano H."/>
            <person name="Wu T."/>
            <person name="Yu G."/>
            <person name="Miranda M."/>
            <person name="Quach H.L."/>
            <person name="Tripp M."/>
            <person name="Chang C.H."/>
            <person name="Lee J.M."/>
            <person name="Toriumi M.J."/>
            <person name="Chan M.M."/>
            <person name="Tang C.C."/>
            <person name="Onodera C.S."/>
            <person name="Deng J.M."/>
            <person name="Akiyama K."/>
            <person name="Ansari Y."/>
            <person name="Arakawa T."/>
            <person name="Banh J."/>
            <person name="Banno F."/>
            <person name="Bowser L."/>
            <person name="Brooks S.Y."/>
            <person name="Carninci P."/>
            <person name="Chao Q."/>
            <person name="Choy N."/>
            <person name="Enju A."/>
            <person name="Goldsmith A.D."/>
            <person name="Gurjal M."/>
            <person name="Hansen N.F."/>
            <person name="Hayashizaki Y."/>
            <person name="Johnson-Hopson C."/>
            <person name="Hsuan V.W."/>
            <person name="Iida K."/>
            <person name="Karnes M."/>
            <person name="Khan S."/>
            <person name="Koesema E."/>
            <person name="Ishida J."/>
            <person name="Jiang P.X."/>
            <person name="Jones T."/>
            <person name="Kawai J."/>
            <person name="Kamiya A."/>
            <person name="Meyers C."/>
            <person name="Nakajima M."/>
            <person name="Narusaka M."/>
            <person name="Seki M."/>
            <person name="Sakurai T."/>
            <person name="Satou M."/>
            <person name="Tamse R."/>
            <person name="Vaysberg M."/>
            <person name="Wallender E.K."/>
            <person name="Wong C."/>
            <person name="Yamamura Y."/>
            <person name="Yuan S."/>
            <person name="Shinozaki K."/>
            <person name="Davis R.W."/>
            <person name="Theologis A."/>
            <person name="Ecker J.R."/>
        </authorList>
    </citation>
    <scope>NUCLEOTIDE SEQUENCE [LARGE SCALE MRNA]</scope>
    <source>
        <strain>cv. Columbia</strain>
    </source>
</reference>
<reference key="4">
    <citation type="submission" date="2002-03" db="EMBL/GenBank/DDBJ databases">
        <title>Full-length cDNA from Arabidopsis thaliana.</title>
        <authorList>
            <person name="Brover V.V."/>
            <person name="Troukhan M.E."/>
            <person name="Alexandrov N.A."/>
            <person name="Lu Y.-P."/>
            <person name="Flavell R.B."/>
            <person name="Feldmann K.A."/>
        </authorList>
    </citation>
    <scope>NUCLEOTIDE SEQUENCE [LARGE SCALE MRNA]</scope>
</reference>
<reference key="5">
    <citation type="journal article" date="2006" name="Plant Physiol.">
        <title>Interaction between Arabidopsis Brca2 and its partners Rad51, Dmc1, and Dss1.</title>
        <authorList>
            <person name="Dray E."/>
            <person name="Siaud N."/>
            <person name="Dubois E."/>
            <person name="Doutriaux M.P."/>
        </authorList>
    </citation>
    <scope>IDENTIFICATION</scope>
    <scope>INTERACTION WITH BRCA2A AND BRCA2B</scope>
</reference>
<reference key="6">
    <citation type="journal article" date="2009" name="J. Proteomics">
        <title>Phosphoproteomic analysis of nuclei-enriched fractions from Arabidopsis thaliana.</title>
        <authorList>
            <person name="Jones A.M.E."/>
            <person name="MacLean D."/>
            <person name="Studholme D.J."/>
            <person name="Serna-Sanz A."/>
            <person name="Andreasson E."/>
            <person name="Rathjen J.P."/>
            <person name="Peck S.C."/>
        </authorList>
    </citation>
    <scope>IDENTIFICATION BY MASS SPECTROMETRY [LARGE SCALE ANALYSIS]</scope>
    <source>
        <strain>cv. Columbia</strain>
    </source>
</reference>
<reference key="7">
    <citation type="journal article" date="2012" name="Plant Signal. Behav.">
        <title>Evidence that the Arabidopsis Ubiquitin C-terminal Hydrolases 1 and 2 associate with the 26S proteasome and the TREX-2 complex.</title>
        <authorList>
            <person name="Tian G."/>
            <person name="Lu Q."/>
            <person name="Kohalmi S.E."/>
            <person name="Rothstein S.J."/>
            <person name="Cui Y."/>
        </authorList>
    </citation>
    <scope>INTERACTION WITH UCH1 AND UCH2</scope>
</reference>
<feature type="chain" id="PRO_0000122965" description="Protein DELETION OF SUV3 SUPPRESSOR 1(I)">
    <location>
        <begin position="1"/>
        <end position="74"/>
    </location>
</feature>
<feature type="region of interest" description="Disordered" evidence="2">
    <location>
        <begin position="35"/>
        <end position="74"/>
    </location>
</feature>
<feature type="compositionally biased region" description="Acidic residues" evidence="2">
    <location>
        <begin position="46"/>
        <end position="57"/>
    </location>
</feature>
<feature type="compositionally biased region" description="Basic and acidic residues" evidence="2">
    <location>
        <begin position="58"/>
        <end position="74"/>
    </location>
</feature>
<protein>
    <recommendedName>
        <fullName evidence="5">Protein DELETION OF SUV3 SUPPRESSOR 1(I)</fullName>
        <shortName evidence="5">AtDSS1(I)</shortName>
    </recommendedName>
    <alternativeName>
        <fullName>Probable 26S proteasome complex subunit sem1-1</fullName>
    </alternativeName>
</protein>
<keyword id="KW-0025">Alternative splicing</keyword>
<keyword id="KW-0647">Proteasome</keyword>
<keyword id="KW-1185">Reference proteome</keyword>
<comment type="function">
    <text evidence="1">Subunit of the 26S proteasome which plays a role in ubiquitin-dependent proteolysis.</text>
</comment>
<comment type="subunit">
    <text evidence="1 3 4">Part of the 26S proteasome (By similarity). Interacts with BRCA2A and BRCA2B (PubMed:16415210). Interacts with UCH1 and UCH2 (PubMed:22951400). Can form a tripartite complex with both RAD51 and BRCA2B or both DMC1 and BRCA2B (PubMed:16415210).</text>
</comment>
<comment type="interaction">
    <interactant intactId="EBI-931045">
        <id>Q9XIR8</id>
    </interactant>
    <interactant intactId="EBI-307680">
        <id>Q7Y1C5</id>
        <label>BRCA2A</label>
    </interactant>
    <organismsDiffer>false</organismsDiffer>
    <experiments>2</experiments>
</comment>
<comment type="interaction">
    <interactant intactId="EBI-931045">
        <id>Q9XIR8</id>
    </interactant>
    <interactant intactId="EBI-307707">
        <id>Q7Y1C4</id>
        <label>BRCA2B</label>
    </interactant>
    <organismsDiffer>false</organismsDiffer>
    <experiments>2</experiments>
</comment>
<comment type="alternative products">
    <event type="alternative splicing"/>
    <isoform>
        <id>Q9XIR8-1</id>
        <name>1</name>
        <sequence type="displayed"/>
    </isoform>
    <text>A number of isoforms are produced. According to EST sequences.</text>
</comment>
<comment type="similarity">
    <text evidence="6">Belongs to the DSS1/SEM1 family.</text>
</comment>
<organism>
    <name type="scientific">Arabidopsis thaliana</name>
    <name type="common">Mouse-ear cress</name>
    <dbReference type="NCBI Taxonomy" id="3702"/>
    <lineage>
        <taxon>Eukaryota</taxon>
        <taxon>Viridiplantae</taxon>
        <taxon>Streptophyta</taxon>
        <taxon>Embryophyta</taxon>
        <taxon>Tracheophyta</taxon>
        <taxon>Spermatophyta</taxon>
        <taxon>Magnoliopsida</taxon>
        <taxon>eudicotyledons</taxon>
        <taxon>Gunneridae</taxon>
        <taxon>Pentapetalae</taxon>
        <taxon>rosids</taxon>
        <taxon>malvids</taxon>
        <taxon>Brassicales</taxon>
        <taxon>Brassicaceae</taxon>
        <taxon>Camelineae</taxon>
        <taxon>Arabidopsis</taxon>
    </lineage>
</organism>
<gene>
    <name evidence="5" type="primary">DSS1(I)</name>
    <name evidence="7" type="ordered locus">At1g64750</name>
    <name evidence="8" type="ORF">F13O11.6</name>
</gene>
<evidence type="ECO:0000250" key="1">
    <source>
        <dbReference type="UniProtKB" id="P60896"/>
    </source>
</evidence>
<evidence type="ECO:0000256" key="2">
    <source>
        <dbReference type="SAM" id="MobiDB-lite"/>
    </source>
</evidence>
<evidence type="ECO:0000269" key="3">
    <source>
    </source>
</evidence>
<evidence type="ECO:0000269" key="4">
    <source>
    </source>
</evidence>
<evidence type="ECO:0000303" key="5">
    <source>
    </source>
</evidence>
<evidence type="ECO:0000305" key="6"/>
<evidence type="ECO:0000312" key="7">
    <source>
        <dbReference type="Araport" id="AT1G64750"/>
    </source>
</evidence>
<evidence type="ECO:0000312" key="8">
    <source>
        <dbReference type="EMBL" id="AAD38250.1"/>
    </source>
</evidence>
<dbReference type="EMBL" id="AC006193">
    <property type="protein sequence ID" value="AAD38250.1"/>
    <property type="molecule type" value="Genomic_DNA"/>
</dbReference>
<dbReference type="EMBL" id="CP002684">
    <property type="protein sequence ID" value="AEE34280.1"/>
    <property type="molecule type" value="Genomic_DNA"/>
</dbReference>
<dbReference type="EMBL" id="CP002684">
    <property type="protein sequence ID" value="AEE34281.1"/>
    <property type="molecule type" value="Genomic_DNA"/>
</dbReference>
<dbReference type="EMBL" id="AY065373">
    <property type="protein sequence ID" value="AAL38814.1"/>
    <property type="molecule type" value="mRNA"/>
</dbReference>
<dbReference type="EMBL" id="AY096483">
    <property type="protein sequence ID" value="AAM20123.1"/>
    <property type="molecule type" value="mRNA"/>
</dbReference>
<dbReference type="EMBL" id="AY085437">
    <property type="protein sequence ID" value="AAM62664.1"/>
    <property type="molecule type" value="mRNA"/>
</dbReference>
<dbReference type="PIR" id="F96670">
    <property type="entry name" value="F96670"/>
</dbReference>
<dbReference type="RefSeq" id="NP_564839.1">
    <molecule id="Q9XIR8-1"/>
    <property type="nucleotide sequence ID" value="NM_105149.4"/>
</dbReference>
<dbReference type="RefSeq" id="NP_974090.1">
    <molecule id="Q9XIR8-1"/>
    <property type="nucleotide sequence ID" value="NM_202361.1"/>
</dbReference>
<dbReference type="SMR" id="Q9XIR8"/>
<dbReference type="BioGRID" id="28004">
    <property type="interactions" value="4"/>
</dbReference>
<dbReference type="FunCoup" id="Q9XIR8">
    <property type="interactions" value="1304"/>
</dbReference>
<dbReference type="IntAct" id="Q9XIR8">
    <property type="interactions" value="6"/>
</dbReference>
<dbReference type="STRING" id="3702.Q9XIR8"/>
<dbReference type="iPTMnet" id="Q9XIR8"/>
<dbReference type="EnsemblPlants" id="AT1G64750.1">
    <molecule id="Q9XIR8-1"/>
    <property type="protein sequence ID" value="AT1G64750.1"/>
    <property type="gene ID" value="AT1G64750"/>
</dbReference>
<dbReference type="EnsemblPlants" id="AT1G64750.2">
    <molecule id="Q9XIR8-1"/>
    <property type="protein sequence ID" value="AT1G64750.2"/>
    <property type="gene ID" value="AT1G64750"/>
</dbReference>
<dbReference type="GeneID" id="842783"/>
<dbReference type="Gramene" id="AT1G64750.1">
    <molecule id="Q9XIR8-1"/>
    <property type="protein sequence ID" value="AT1G64750.1"/>
    <property type="gene ID" value="AT1G64750"/>
</dbReference>
<dbReference type="Gramene" id="AT1G64750.2">
    <molecule id="Q9XIR8-1"/>
    <property type="protein sequence ID" value="AT1G64750.2"/>
    <property type="gene ID" value="AT1G64750"/>
</dbReference>
<dbReference type="KEGG" id="ath:AT1G64750"/>
<dbReference type="Araport" id="AT1G64750"/>
<dbReference type="TAIR" id="AT1G64750">
    <property type="gene designation" value="DSS1(I)"/>
</dbReference>
<dbReference type="HOGENOM" id="CLU_141774_1_1_1"/>
<dbReference type="InParanoid" id="Q9XIR8"/>
<dbReference type="OMA" id="EWPERRE"/>
<dbReference type="PhylomeDB" id="Q9XIR8"/>
<dbReference type="PRO" id="PR:Q9XIR8"/>
<dbReference type="Proteomes" id="UP000006548">
    <property type="component" value="Chromosome 1"/>
</dbReference>
<dbReference type="ExpressionAtlas" id="Q9XIR8">
    <property type="expression patterns" value="baseline and differential"/>
</dbReference>
<dbReference type="GO" id="GO:0008541">
    <property type="term" value="C:proteasome regulatory particle, lid subcomplex"/>
    <property type="evidence" value="ECO:0007669"/>
    <property type="project" value="InterPro"/>
</dbReference>
<dbReference type="GO" id="GO:0006406">
    <property type="term" value="P:mRNA export from nucleus"/>
    <property type="evidence" value="ECO:0007669"/>
    <property type="project" value="InterPro"/>
</dbReference>
<dbReference type="GO" id="GO:0043248">
    <property type="term" value="P:proteasome assembly"/>
    <property type="evidence" value="ECO:0007669"/>
    <property type="project" value="InterPro"/>
</dbReference>
<dbReference type="InterPro" id="IPR007834">
    <property type="entry name" value="DSS1_SEM1"/>
</dbReference>
<dbReference type="PANTHER" id="PTHR16771">
    <property type="entry name" value="26 PROTEASOME COMPLEX SUBUNIT DSS1"/>
    <property type="match status" value="1"/>
</dbReference>
<dbReference type="PANTHER" id="PTHR16771:SF17">
    <property type="entry name" value="PROTEIN DELETION OF SUV3 SUPPRESSOR 1(I)-RELATED"/>
    <property type="match status" value="1"/>
</dbReference>
<dbReference type="Pfam" id="PF05160">
    <property type="entry name" value="DSS1_SEM1"/>
    <property type="match status" value="1"/>
</dbReference>
<dbReference type="SMART" id="SM01385">
    <property type="entry name" value="DSS1_SEM1"/>
    <property type="match status" value="1"/>
</dbReference>
<proteinExistence type="evidence at protein level"/>